<comment type="function">
    <text evidence="1">Catalyzes the synthesis of N-((2S)-2-amino-2-carboxyethyl)-L-glutamate (ACEGA) from O-phospho-L-serine and L-glutamate. Involved in the biosynthesis of L-2,3-diaminopropionic acid (L-Dap), a precursor of staphyloferrin B and antibiotics.</text>
</comment>
<comment type="catalytic activity">
    <reaction evidence="1">
        <text>O-phospho-L-serine + L-glutamate = N-[(2S)-2-amino-2-carboxyethyl]-L-glutamate + phosphate + H(+)</text>
        <dbReference type="Rhea" id="RHEA:52384"/>
        <dbReference type="ChEBI" id="CHEBI:15378"/>
        <dbReference type="ChEBI" id="CHEBI:29985"/>
        <dbReference type="ChEBI" id="CHEBI:43474"/>
        <dbReference type="ChEBI" id="CHEBI:57524"/>
        <dbReference type="ChEBI" id="CHEBI:134610"/>
        <dbReference type="EC" id="2.5.1.140"/>
    </reaction>
</comment>
<comment type="cofactor">
    <cofactor evidence="1">
        <name>pyridoxal 5'-phosphate</name>
        <dbReference type="ChEBI" id="CHEBI:597326"/>
    </cofactor>
</comment>
<comment type="pathway">
    <text evidence="1">Siderophore biosynthesis.</text>
</comment>
<comment type="subunit">
    <text evidence="1">Homodimer.</text>
</comment>
<comment type="induction">
    <text evidence="2">Up-regulated under iron-deficient growth conditions. Repressed by Fur under iron-rich growth conditions.</text>
</comment>
<comment type="similarity">
    <text evidence="3">Belongs to the cysteine synthase/cystathionine beta-synthase family. SbnA subfamily.</text>
</comment>
<dbReference type="EC" id="2.5.1.140" evidence="1"/>
<dbReference type="EMBL" id="AJ938182">
    <property type="protein sequence ID" value="CAI79743.1"/>
    <property type="molecule type" value="Genomic_DNA"/>
</dbReference>
<dbReference type="RefSeq" id="WP_000570810.1">
    <property type="nucleotide sequence ID" value="NC_007622.1"/>
</dbReference>
<dbReference type="SMR" id="Q2YUU0"/>
<dbReference type="KEGG" id="sab:SAB0055"/>
<dbReference type="HOGENOM" id="CLU_021018_1_0_9"/>
<dbReference type="GO" id="GO:0016765">
    <property type="term" value="F:transferase activity, transferring alkyl or aryl (other than methyl) groups"/>
    <property type="evidence" value="ECO:0007669"/>
    <property type="project" value="UniProtKB-ARBA"/>
</dbReference>
<dbReference type="GO" id="GO:0006535">
    <property type="term" value="P:cysteine biosynthetic process from serine"/>
    <property type="evidence" value="ECO:0007669"/>
    <property type="project" value="InterPro"/>
</dbReference>
<dbReference type="CDD" id="cd01561">
    <property type="entry name" value="CBS_like"/>
    <property type="match status" value="1"/>
</dbReference>
<dbReference type="Gene3D" id="3.40.50.1100">
    <property type="match status" value="2"/>
</dbReference>
<dbReference type="InterPro" id="IPR050214">
    <property type="entry name" value="Cys_Synth/Cystath_Beta-Synth"/>
</dbReference>
<dbReference type="InterPro" id="IPR001216">
    <property type="entry name" value="P-phosphate_BS"/>
</dbReference>
<dbReference type="InterPro" id="IPR023927">
    <property type="entry name" value="SbnA"/>
</dbReference>
<dbReference type="InterPro" id="IPR001926">
    <property type="entry name" value="TrpB-like_PALP"/>
</dbReference>
<dbReference type="InterPro" id="IPR036052">
    <property type="entry name" value="TrpB-like_PALP_sf"/>
</dbReference>
<dbReference type="NCBIfam" id="TIGR03945">
    <property type="entry name" value="PLP_SbnA_fam"/>
    <property type="match status" value="1"/>
</dbReference>
<dbReference type="PANTHER" id="PTHR10314">
    <property type="entry name" value="CYSTATHIONINE BETA-SYNTHASE"/>
    <property type="match status" value="1"/>
</dbReference>
<dbReference type="Pfam" id="PF00291">
    <property type="entry name" value="PALP"/>
    <property type="match status" value="1"/>
</dbReference>
<dbReference type="SUPFAM" id="SSF53686">
    <property type="entry name" value="Tryptophan synthase beta subunit-like PLP-dependent enzymes"/>
    <property type="match status" value="1"/>
</dbReference>
<dbReference type="PROSITE" id="PS00901">
    <property type="entry name" value="CYS_SYNTHASE"/>
    <property type="match status" value="1"/>
</dbReference>
<evidence type="ECO:0000250" key="1">
    <source>
        <dbReference type="UniProtKB" id="A6QDA0"/>
    </source>
</evidence>
<evidence type="ECO:0000250" key="2">
    <source>
        <dbReference type="UniProtKB" id="Q2G1N3"/>
    </source>
</evidence>
<evidence type="ECO:0000305" key="3"/>
<sequence>MIEKSQACHDSLLDSVGQTPMVQLHQLFPKHEVFAKLEYMNPGGSMKDRPAKYIIEHGIKHGLITENTHLIESTSGNLGIALAMIAKIKGLKLTCVVDPKISPTNLKIIKSYGVNVEMVEEPDAHGGYLMTRIAKVQELLATIEDAYWINQYANELNWQSHYHGAGTEIVETIKQPIDYFVAPVSTTGSIMGMSRKIKEVHPNVQIVAVDAKGSVIFGDKPINRELPGIGASRVPEILNRSEINQVIHVDDYQSALGCRKLIDYEGIFAGGSTGSIIVAIEQLITSIEEGATIVTILPDRGDRYLDLVYSDTWLEKMKSRQGVKSE</sequence>
<reference key="1">
    <citation type="journal article" date="2007" name="PLoS ONE">
        <title>Molecular correlates of host specialization in Staphylococcus aureus.</title>
        <authorList>
            <person name="Herron-Olson L."/>
            <person name="Fitzgerald J.R."/>
            <person name="Musser J.M."/>
            <person name="Kapur V."/>
        </authorList>
    </citation>
    <scope>NUCLEOTIDE SEQUENCE [LARGE SCALE GENOMIC DNA]</scope>
    <source>
        <strain>bovine RF122 / ET3-1</strain>
    </source>
</reference>
<protein>
    <recommendedName>
        <fullName evidence="3">N-(2-amino-2-carboxyethyl)-L-glutamate synthase</fullName>
        <shortName evidence="3">ACEGA synthase</shortName>
        <ecNumber evidence="1">2.5.1.140</ecNumber>
    </recommendedName>
</protein>
<name>SBNA_STAAB</name>
<organism>
    <name type="scientific">Staphylococcus aureus (strain bovine RF122 / ET3-1)</name>
    <dbReference type="NCBI Taxonomy" id="273036"/>
    <lineage>
        <taxon>Bacteria</taxon>
        <taxon>Bacillati</taxon>
        <taxon>Bacillota</taxon>
        <taxon>Bacilli</taxon>
        <taxon>Bacillales</taxon>
        <taxon>Staphylococcaceae</taxon>
        <taxon>Staphylococcus</taxon>
    </lineage>
</organism>
<gene>
    <name type="primary">sbnA</name>
    <name type="ordered locus">SAB0055</name>
</gene>
<accession>Q2YUU0</accession>
<proteinExistence type="inferred from homology"/>
<keyword id="KW-0663">Pyridoxal phosphate</keyword>
<keyword id="KW-0808">Transferase</keyword>
<feature type="chain" id="PRO_0000395011" description="N-(2-amino-2-carboxyethyl)-L-glutamate synthase">
    <location>
        <begin position="1"/>
        <end position="326"/>
    </location>
</feature>
<feature type="binding site" evidence="1">
    <location>
        <position position="77"/>
    </location>
    <ligand>
        <name>pyridoxal 5'-phosphate</name>
        <dbReference type="ChEBI" id="CHEBI:597326"/>
    </ligand>
</feature>
<feature type="binding site" evidence="1">
    <location>
        <begin position="185"/>
        <end position="189"/>
    </location>
    <ligand>
        <name>pyridoxal 5'-phosphate</name>
        <dbReference type="ChEBI" id="CHEBI:597326"/>
    </ligand>
</feature>
<feature type="binding site" evidence="1">
    <location>
        <position position="272"/>
    </location>
    <ligand>
        <name>pyridoxal 5'-phosphate</name>
        <dbReference type="ChEBI" id="CHEBI:597326"/>
    </ligand>
</feature>
<feature type="modified residue" description="N6-(pyridoxal phosphate)lysine" evidence="1">
    <location>
        <position position="47"/>
    </location>
</feature>